<accession>Q5HMC6</accession>
<proteinExistence type="inferred from homology"/>
<keyword id="KW-0326">Glycosidase</keyword>
<keyword id="KW-0378">Hydrolase</keyword>
<keyword id="KW-1185">Reference proteome</keyword>
<keyword id="KW-0964">Secreted</keyword>
<keyword id="KW-0732">Signal</keyword>
<feature type="signal peptide" evidence="2">
    <location>
        <begin position="1"/>
        <end position="27"/>
    </location>
</feature>
<feature type="chain" id="PRO_0000320318" description="Probable transglycosylase SceD">
    <location>
        <begin position="28"/>
        <end position="219"/>
    </location>
</feature>
<feature type="region of interest" description="Disordered" evidence="3">
    <location>
        <begin position="86"/>
        <end position="143"/>
    </location>
</feature>
<feature type="compositionally biased region" description="Low complexity" evidence="3">
    <location>
        <begin position="89"/>
        <end position="140"/>
    </location>
</feature>
<protein>
    <recommendedName>
        <fullName>Probable transglycosylase SceD</fullName>
        <ecNumber>3.2.-.-</ecNumber>
    </recommendedName>
</protein>
<gene>
    <name type="primary">sceD</name>
    <name type="ordered locus">SERP1702</name>
</gene>
<comment type="function">
    <text evidence="1">Is able to cleave peptidoglycan and affects clumping and separation of bacterial cells.</text>
</comment>
<comment type="subcellular location">
    <subcellularLocation>
        <location evidence="1">Secreted</location>
    </subcellularLocation>
</comment>
<comment type="similarity">
    <text evidence="4">Belongs to the transglycosylase family. SceD subfamily.</text>
</comment>
<name>SCED_STAEQ</name>
<organism>
    <name type="scientific">Staphylococcus epidermidis (strain ATCC 35984 / DSM 28319 / BCRC 17069 / CCUG 31568 / BM 3577 / RP62A)</name>
    <dbReference type="NCBI Taxonomy" id="176279"/>
    <lineage>
        <taxon>Bacteria</taxon>
        <taxon>Bacillati</taxon>
        <taxon>Bacillota</taxon>
        <taxon>Bacilli</taxon>
        <taxon>Bacillales</taxon>
        <taxon>Staphylococcaceae</taxon>
        <taxon>Staphylococcus</taxon>
    </lineage>
</organism>
<sequence length="219" mass="23056">MKKTLVASSLAIGLGVVAGNAGHDAHASETTNVDKAELAQKALTNDQSLNESPVQEGAYNINFDYNGNSYHFESDGSTWSWSYESTNNATQPVQPSQSQVATQQQPVQVSAPQNEQTAQPQTKSTSTSQTSSSKASSGSSVNVNSHLQQIAQRESGGDIHAINPSSGAAGKYQFLQSTWDSVAPSQYKGVSPAKAPESVQDRAAVKLYNTGGPGHWVTA</sequence>
<reference key="1">
    <citation type="journal article" date="2005" name="J. Bacteriol.">
        <title>Insights on evolution of virulence and resistance from the complete genome analysis of an early methicillin-resistant Staphylococcus aureus strain and a biofilm-producing methicillin-resistant Staphylococcus epidermidis strain.</title>
        <authorList>
            <person name="Gill S.R."/>
            <person name="Fouts D.E."/>
            <person name="Archer G.L."/>
            <person name="Mongodin E.F."/>
            <person name="DeBoy R.T."/>
            <person name="Ravel J."/>
            <person name="Paulsen I.T."/>
            <person name="Kolonay J.F."/>
            <person name="Brinkac L.M."/>
            <person name="Beanan M.J."/>
            <person name="Dodson R.J."/>
            <person name="Daugherty S.C."/>
            <person name="Madupu R."/>
            <person name="Angiuoli S.V."/>
            <person name="Durkin A.S."/>
            <person name="Haft D.H."/>
            <person name="Vamathevan J.J."/>
            <person name="Khouri H."/>
            <person name="Utterback T.R."/>
            <person name="Lee C."/>
            <person name="Dimitrov G."/>
            <person name="Jiang L."/>
            <person name="Qin H."/>
            <person name="Weidman J."/>
            <person name="Tran K."/>
            <person name="Kang K.H."/>
            <person name="Hance I.R."/>
            <person name="Nelson K.E."/>
            <person name="Fraser C.M."/>
        </authorList>
    </citation>
    <scope>NUCLEOTIDE SEQUENCE [LARGE SCALE GENOMIC DNA]</scope>
    <source>
        <strain>ATCC 35984 / DSM 28319 / BCRC 17069 / CCUG 31568 / BM 3577 / RP62A</strain>
    </source>
</reference>
<dbReference type="EC" id="3.2.-.-"/>
<dbReference type="EMBL" id="CP000029">
    <property type="protein sequence ID" value="AAW55080.1"/>
    <property type="molecule type" value="Genomic_DNA"/>
</dbReference>
<dbReference type="RefSeq" id="WP_001829904.1">
    <property type="nucleotide sequence ID" value="NC_002976.3"/>
</dbReference>
<dbReference type="SMR" id="Q5HMC6"/>
<dbReference type="STRING" id="176279.SERP1702"/>
<dbReference type="KEGG" id="ser:SERP1702"/>
<dbReference type="eggNOG" id="COG1388">
    <property type="taxonomic scope" value="Bacteria"/>
</dbReference>
<dbReference type="HOGENOM" id="CLU_099865_0_0_9"/>
<dbReference type="Proteomes" id="UP000000531">
    <property type="component" value="Chromosome"/>
</dbReference>
<dbReference type="GO" id="GO:0005576">
    <property type="term" value="C:extracellular region"/>
    <property type="evidence" value="ECO:0007669"/>
    <property type="project" value="UniProtKB-SubCell"/>
</dbReference>
<dbReference type="GO" id="GO:0016798">
    <property type="term" value="F:hydrolase activity, acting on glycosyl bonds"/>
    <property type="evidence" value="ECO:0007669"/>
    <property type="project" value="UniProtKB-KW"/>
</dbReference>
<dbReference type="CDD" id="cd13925">
    <property type="entry name" value="RPF"/>
    <property type="match status" value="1"/>
</dbReference>
<dbReference type="Gene3D" id="1.10.530.10">
    <property type="match status" value="1"/>
</dbReference>
<dbReference type="InterPro" id="IPR023346">
    <property type="entry name" value="Lysozyme-like_dom_sf"/>
</dbReference>
<dbReference type="InterPro" id="IPR010618">
    <property type="entry name" value="RPF"/>
</dbReference>
<dbReference type="Pfam" id="PF06737">
    <property type="entry name" value="Transglycosylas"/>
    <property type="match status" value="1"/>
</dbReference>
<dbReference type="SUPFAM" id="SSF53955">
    <property type="entry name" value="Lysozyme-like"/>
    <property type="match status" value="1"/>
</dbReference>
<evidence type="ECO:0000250" key="1"/>
<evidence type="ECO:0000255" key="2"/>
<evidence type="ECO:0000256" key="3">
    <source>
        <dbReference type="SAM" id="MobiDB-lite"/>
    </source>
</evidence>
<evidence type="ECO:0000305" key="4"/>